<gene>
    <name evidence="1" type="primary">hflD</name>
    <name type="ordered locus">ECSE_1198</name>
</gene>
<organism>
    <name type="scientific">Escherichia coli (strain SE11)</name>
    <dbReference type="NCBI Taxonomy" id="409438"/>
    <lineage>
        <taxon>Bacteria</taxon>
        <taxon>Pseudomonadati</taxon>
        <taxon>Pseudomonadota</taxon>
        <taxon>Gammaproteobacteria</taxon>
        <taxon>Enterobacterales</taxon>
        <taxon>Enterobacteriaceae</taxon>
        <taxon>Escherichia</taxon>
    </lineage>
</organism>
<keyword id="KW-0997">Cell inner membrane</keyword>
<keyword id="KW-1003">Cell membrane</keyword>
<keyword id="KW-0175">Coiled coil</keyword>
<keyword id="KW-0963">Cytoplasm</keyword>
<keyword id="KW-0472">Membrane</keyword>
<sequence length="213" mass="22948">MAKNYYDITLALAGICQSARLVQQLAHQGHCDADALHVSLNSIIDMNPSSTLAVFGGSEANLRVGLETLLGVLNASSRQGLNAELTRYTLSLMVLERKLSSAKGALDTLGNRINGLQRQLEHFDLQSETLMSAMAAIYVDVISPLGPRIQVTGSPAVLQSPQVQAKVRATLLAGIRAAVLWHQVGGGRLQLMFSRNRLTTQAKQILAHLTPEL</sequence>
<protein>
    <recommendedName>
        <fullName evidence="1">High frequency lysogenization protein HflD</fullName>
    </recommendedName>
</protein>
<comment type="function">
    <text evidence="1">Negative regulator of phage lambda lysogenization. Contributes to the degradation of the phage regulatory protein CII. Acts probably by holding CII on the membrane surface, away from the target promoters, but close to the FtsH protease.</text>
</comment>
<comment type="subunit">
    <text evidence="1">Interacts with CII protein from phage lambda.</text>
</comment>
<comment type="subcellular location">
    <subcellularLocation>
        <location>Cytoplasm</location>
    </subcellularLocation>
    <subcellularLocation>
        <location evidence="1">Cell inner membrane</location>
        <topology evidence="1">Peripheral membrane protein</topology>
        <orientation evidence="1">Cytoplasmic side</orientation>
    </subcellularLocation>
</comment>
<comment type="similarity">
    <text evidence="1">Belongs to the HflD family.</text>
</comment>
<proteinExistence type="inferred from homology"/>
<accession>B6I9L1</accession>
<reference key="1">
    <citation type="journal article" date="2008" name="DNA Res.">
        <title>Complete genome sequence and comparative analysis of the wild-type commensal Escherichia coli strain SE11 isolated from a healthy adult.</title>
        <authorList>
            <person name="Oshima K."/>
            <person name="Toh H."/>
            <person name="Ogura Y."/>
            <person name="Sasamoto H."/>
            <person name="Morita H."/>
            <person name="Park S.-H."/>
            <person name="Ooka T."/>
            <person name="Iyoda S."/>
            <person name="Taylor T.D."/>
            <person name="Hayashi T."/>
            <person name="Itoh K."/>
            <person name="Hattori M."/>
        </authorList>
    </citation>
    <scope>NUCLEOTIDE SEQUENCE [LARGE SCALE GENOMIC DNA]</scope>
    <source>
        <strain>SE11</strain>
    </source>
</reference>
<name>HFLD_ECOSE</name>
<evidence type="ECO:0000255" key="1">
    <source>
        <dbReference type="HAMAP-Rule" id="MF_00695"/>
    </source>
</evidence>
<feature type="chain" id="PRO_1000132288" description="High frequency lysogenization protein HflD">
    <location>
        <begin position="1"/>
        <end position="213"/>
    </location>
</feature>
<feature type="coiled-coil region" evidence="1">
    <location>
        <begin position="79"/>
        <end position="126"/>
    </location>
</feature>
<dbReference type="EMBL" id="AP009240">
    <property type="protein sequence ID" value="BAG76722.1"/>
    <property type="molecule type" value="Genomic_DNA"/>
</dbReference>
<dbReference type="RefSeq" id="WP_001297479.1">
    <property type="nucleotide sequence ID" value="NC_011415.1"/>
</dbReference>
<dbReference type="SMR" id="B6I9L1"/>
<dbReference type="GeneID" id="93776278"/>
<dbReference type="KEGG" id="ecy:ECSE_1198"/>
<dbReference type="HOGENOM" id="CLU_098920_0_0_6"/>
<dbReference type="Proteomes" id="UP000008199">
    <property type="component" value="Chromosome"/>
</dbReference>
<dbReference type="GO" id="GO:0005737">
    <property type="term" value="C:cytoplasm"/>
    <property type="evidence" value="ECO:0007669"/>
    <property type="project" value="UniProtKB-SubCell"/>
</dbReference>
<dbReference type="GO" id="GO:0005886">
    <property type="term" value="C:plasma membrane"/>
    <property type="evidence" value="ECO:0007669"/>
    <property type="project" value="UniProtKB-SubCell"/>
</dbReference>
<dbReference type="FunFam" id="1.10.3890.10:FF:000001">
    <property type="entry name" value="High frequency lysogenization protein HflD homolog"/>
    <property type="match status" value="1"/>
</dbReference>
<dbReference type="Gene3D" id="1.10.3890.10">
    <property type="entry name" value="HflD-like"/>
    <property type="match status" value="1"/>
</dbReference>
<dbReference type="HAMAP" id="MF_00695">
    <property type="entry name" value="HflD_protein"/>
    <property type="match status" value="1"/>
</dbReference>
<dbReference type="InterPro" id="IPR007451">
    <property type="entry name" value="HflD"/>
</dbReference>
<dbReference type="InterPro" id="IPR035932">
    <property type="entry name" value="HflD-like_sf"/>
</dbReference>
<dbReference type="NCBIfam" id="NF001245">
    <property type="entry name" value="PRK00218.1-1"/>
    <property type="match status" value="1"/>
</dbReference>
<dbReference type="NCBIfam" id="NF001246">
    <property type="entry name" value="PRK00218.1-2"/>
    <property type="match status" value="1"/>
</dbReference>
<dbReference type="NCBIfam" id="NF001248">
    <property type="entry name" value="PRK00218.1-4"/>
    <property type="match status" value="1"/>
</dbReference>
<dbReference type="NCBIfam" id="NF001249">
    <property type="entry name" value="PRK00218.1-5"/>
    <property type="match status" value="1"/>
</dbReference>
<dbReference type="PANTHER" id="PTHR38100">
    <property type="entry name" value="HIGH FREQUENCY LYSOGENIZATION PROTEIN HFLD"/>
    <property type="match status" value="1"/>
</dbReference>
<dbReference type="PANTHER" id="PTHR38100:SF1">
    <property type="entry name" value="HIGH FREQUENCY LYSOGENIZATION PROTEIN HFLD"/>
    <property type="match status" value="1"/>
</dbReference>
<dbReference type="Pfam" id="PF04356">
    <property type="entry name" value="DUF489"/>
    <property type="match status" value="1"/>
</dbReference>
<dbReference type="SUPFAM" id="SSF101322">
    <property type="entry name" value="YcfC-like"/>
    <property type="match status" value="1"/>
</dbReference>